<name>LA89_LACAI</name>
<dbReference type="EMBL" id="D43626">
    <property type="protein sequence ID" value="BAA07737.1"/>
    <property type="molecule type" value="Genomic_DNA"/>
</dbReference>
<dbReference type="EMBL" id="AB081463">
    <property type="protein sequence ID" value="BAB86322.1"/>
    <property type="molecule type" value="Genomic_DNA"/>
</dbReference>
<dbReference type="RefSeq" id="NP_604414.1">
    <property type="nucleotide sequence ID" value="NC_003458.1"/>
</dbReference>
<dbReference type="RefSeq" id="WP_011017212.1">
    <property type="nucleotide sequence ID" value="NC_003458.1"/>
</dbReference>
<dbReference type="GO" id="GO:0005576">
    <property type="term" value="C:extracellular region"/>
    <property type="evidence" value="ECO:0007669"/>
    <property type="project" value="UniProtKB-SubCell"/>
</dbReference>
<dbReference type="GO" id="GO:0042742">
    <property type="term" value="P:defense response to bacterium"/>
    <property type="evidence" value="ECO:0007669"/>
    <property type="project" value="UniProtKB-KW"/>
</dbReference>
<dbReference type="GO" id="GO:0031640">
    <property type="term" value="P:killing of cells of another organism"/>
    <property type="evidence" value="ECO:0007669"/>
    <property type="project" value="UniProtKB-KW"/>
</dbReference>
<dbReference type="InterPro" id="IPR010133">
    <property type="entry name" value="Bacteriocin_signal_seq"/>
</dbReference>
<dbReference type="NCBIfam" id="TIGR01847">
    <property type="entry name" value="bacteriocin_sig"/>
    <property type="match status" value="1"/>
</dbReference>
<geneLocation type="plasmid">
    <name>pLA103</name>
</geneLocation>
<evidence type="ECO:0000269" key="1">
    <source>
    </source>
</evidence>
<evidence type="ECO:0000305" key="2"/>
<sequence length="46" mass="5331">MISSHQKTLTDKELALISGGKTHYPTNAWKSLWKGFWESLRYTDGF</sequence>
<keyword id="KW-0044">Antibiotic</keyword>
<keyword id="KW-0929">Antimicrobial</keyword>
<keyword id="KW-0078">Bacteriocin</keyword>
<keyword id="KW-0903">Direct protein sequencing</keyword>
<keyword id="KW-0614">Plasmid</keyword>
<keyword id="KW-0964">Secreted</keyword>
<comment type="function">
    <text>Has a bactericidal effect on sensitive cells but not a bacteriolytic effect.</text>
</comment>
<comment type="subcellular location">
    <subcellularLocation>
        <location>Secreted</location>
    </subcellularLocation>
</comment>
<feature type="propeptide" id="PRO_0000002762" evidence="1">
    <location>
        <begin position="1"/>
        <end position="20"/>
    </location>
</feature>
<feature type="peptide" id="PRO_0000002763" description="Bacteriocin acidocin 8912">
    <location>
        <begin position="21"/>
        <end position="46"/>
    </location>
</feature>
<feature type="sequence conflict" description="In Ref. 3; AA sequence." evidence="2" ref="3">
    <original>W</original>
    <variation>R</variation>
    <location>
        <position position="33"/>
    </location>
</feature>
<reference key="1">
    <citation type="journal article" date="1995" name="Lett. Appl. Microbiol.">
        <title>Cloning and nucleotide sequence of the gene for acidocin 8912, a bacteriocin from Lactobacillus acidophilus TK8912.</title>
        <authorList>
            <person name="Kanatani K."/>
            <person name="Tahara T."/>
            <person name="Oshimura M."/>
            <person name="Sano K."/>
            <person name="Umezawa C."/>
        </authorList>
    </citation>
    <scope>NUCLEOTIDE SEQUENCE [GENOMIC DNA]</scope>
    <source>
        <strain>TK8912</strain>
    </source>
</reference>
<reference key="2">
    <citation type="submission" date="2002-03" db="EMBL/GenBank/DDBJ databases">
        <authorList>
            <person name="Nakachi I."/>
        </authorList>
    </citation>
    <scope>NUCLEOTIDE SEQUENCE [GENOMIC DNA]</scope>
    <source>
        <strain>TK8912</strain>
    </source>
</reference>
<reference key="3">
    <citation type="journal article" date="1992" name="Biosci. Biotechnol. Biochem.">
        <title>Purification and some properties of acidocin 8912, a novel bacteriocin produced by Lactobacillus acidophilus TK8912.</title>
        <authorList>
            <person name="Tahara T."/>
            <person name="Kanatani K."/>
            <person name="Yoshida K."/>
            <person name="Miura H."/>
            <person name="Sakamoto M."/>
            <person name="Oshimura M."/>
        </authorList>
    </citation>
    <scope>PROTEIN SEQUENCE OF 21-44</scope>
    <source>
        <strain>TK8912</strain>
    </source>
</reference>
<protein>
    <recommendedName>
        <fullName>Bacteriocin acidocin 8912</fullName>
    </recommendedName>
</protein>
<organism>
    <name type="scientific">Lactobacillus acidophilus</name>
    <dbReference type="NCBI Taxonomy" id="1579"/>
    <lineage>
        <taxon>Bacteria</taxon>
        <taxon>Bacillati</taxon>
        <taxon>Bacillota</taxon>
        <taxon>Bacilli</taxon>
        <taxon>Lactobacillales</taxon>
        <taxon>Lactobacillaceae</taxon>
        <taxon>Lactobacillus</taxon>
    </lineage>
</organism>
<gene>
    <name type="primary">acdT</name>
</gene>
<proteinExistence type="evidence at protein level"/>
<accession>Q48501</accession>
<accession>Q9R5H2</accession>